<sequence length="254" mass="28425">MWIGVISLFPEMFRAITDYGVTGRAVKKGLLSVQCWNPRDFTHDRHRTVDDRPYGGGPGMLMMVQPLRDAIHAAKAAAGEGAKVIYLSPQGRKLDQQGVCELSVSQKLILVCGRYEGIDERVIQTEIDEEWSIGDYVLSGGELPAMTLIDSISRFVPGVLGDQASAEEDSFVDGLLDCPHYTRPEVLQDMEVPPVLLSGNHAEIRRWRLKQSLGRTWLRRPELLESLALTDEQAKLLTQFRKEHAAQQDHEGCD</sequence>
<accession>C5BGG0</accession>
<name>TRMD_EDWI9</name>
<keyword id="KW-0963">Cytoplasm</keyword>
<keyword id="KW-0489">Methyltransferase</keyword>
<keyword id="KW-0949">S-adenosyl-L-methionine</keyword>
<keyword id="KW-0808">Transferase</keyword>
<keyword id="KW-0819">tRNA processing</keyword>
<evidence type="ECO:0000255" key="1">
    <source>
        <dbReference type="HAMAP-Rule" id="MF_00605"/>
    </source>
</evidence>
<feature type="chain" id="PRO_1000212224" description="tRNA (guanine-N(1)-)-methyltransferase">
    <location>
        <begin position="1"/>
        <end position="254"/>
    </location>
</feature>
<feature type="binding site" evidence="1">
    <location>
        <position position="113"/>
    </location>
    <ligand>
        <name>S-adenosyl-L-methionine</name>
        <dbReference type="ChEBI" id="CHEBI:59789"/>
    </ligand>
</feature>
<feature type="binding site" evidence="1">
    <location>
        <begin position="133"/>
        <end position="138"/>
    </location>
    <ligand>
        <name>S-adenosyl-L-methionine</name>
        <dbReference type="ChEBI" id="CHEBI:59789"/>
    </ligand>
</feature>
<protein>
    <recommendedName>
        <fullName evidence="1">tRNA (guanine-N(1)-)-methyltransferase</fullName>
        <ecNumber evidence="1">2.1.1.228</ecNumber>
    </recommendedName>
    <alternativeName>
        <fullName evidence="1">M1G-methyltransferase</fullName>
    </alternativeName>
    <alternativeName>
        <fullName evidence="1">tRNA [GM37] methyltransferase</fullName>
    </alternativeName>
</protein>
<proteinExistence type="inferred from homology"/>
<dbReference type="EC" id="2.1.1.228" evidence="1"/>
<dbReference type="EMBL" id="CP001600">
    <property type="protein sequence ID" value="ACR70366.1"/>
    <property type="molecule type" value="Genomic_DNA"/>
</dbReference>
<dbReference type="RefSeq" id="WP_015872451.1">
    <property type="nucleotide sequence ID" value="NZ_CP169062.1"/>
</dbReference>
<dbReference type="SMR" id="C5BGG0"/>
<dbReference type="STRING" id="67780.B6E78_07745"/>
<dbReference type="GeneID" id="69540087"/>
<dbReference type="KEGG" id="eic:NT01EI_3221"/>
<dbReference type="PATRIC" id="fig|634503.3.peg.2872"/>
<dbReference type="HOGENOM" id="CLU_047363_0_1_6"/>
<dbReference type="OrthoDB" id="9807416at2"/>
<dbReference type="Proteomes" id="UP000001485">
    <property type="component" value="Chromosome"/>
</dbReference>
<dbReference type="GO" id="GO:0005829">
    <property type="term" value="C:cytosol"/>
    <property type="evidence" value="ECO:0007669"/>
    <property type="project" value="TreeGrafter"/>
</dbReference>
<dbReference type="GO" id="GO:0052906">
    <property type="term" value="F:tRNA (guanine(37)-N1)-methyltransferase activity"/>
    <property type="evidence" value="ECO:0007669"/>
    <property type="project" value="UniProtKB-UniRule"/>
</dbReference>
<dbReference type="GO" id="GO:0002939">
    <property type="term" value="P:tRNA N1-guanine methylation"/>
    <property type="evidence" value="ECO:0007669"/>
    <property type="project" value="TreeGrafter"/>
</dbReference>
<dbReference type="CDD" id="cd18080">
    <property type="entry name" value="TrmD-like"/>
    <property type="match status" value="1"/>
</dbReference>
<dbReference type="FunFam" id="1.10.1270.20:FF:000001">
    <property type="entry name" value="tRNA (guanine-N(1)-)-methyltransferase"/>
    <property type="match status" value="1"/>
</dbReference>
<dbReference type="FunFam" id="3.40.1280.10:FF:000001">
    <property type="entry name" value="tRNA (guanine-N(1)-)-methyltransferase"/>
    <property type="match status" value="1"/>
</dbReference>
<dbReference type="Gene3D" id="3.40.1280.10">
    <property type="match status" value="1"/>
</dbReference>
<dbReference type="Gene3D" id="1.10.1270.20">
    <property type="entry name" value="tRNA(m1g37)methyltransferase, domain 2"/>
    <property type="match status" value="1"/>
</dbReference>
<dbReference type="HAMAP" id="MF_00605">
    <property type="entry name" value="TrmD"/>
    <property type="match status" value="1"/>
</dbReference>
<dbReference type="InterPro" id="IPR029028">
    <property type="entry name" value="Alpha/beta_knot_MTases"/>
</dbReference>
<dbReference type="InterPro" id="IPR023148">
    <property type="entry name" value="tRNA_m1G_MeTrfase_C_sf"/>
</dbReference>
<dbReference type="InterPro" id="IPR002649">
    <property type="entry name" value="tRNA_m1G_MeTrfase_TrmD"/>
</dbReference>
<dbReference type="InterPro" id="IPR029026">
    <property type="entry name" value="tRNA_m1G_MTases_N"/>
</dbReference>
<dbReference type="InterPro" id="IPR016009">
    <property type="entry name" value="tRNA_MeTrfase_TRMD/TRM10"/>
</dbReference>
<dbReference type="NCBIfam" id="NF000648">
    <property type="entry name" value="PRK00026.1"/>
    <property type="match status" value="1"/>
</dbReference>
<dbReference type="NCBIfam" id="TIGR00088">
    <property type="entry name" value="trmD"/>
    <property type="match status" value="1"/>
</dbReference>
<dbReference type="PANTHER" id="PTHR46417">
    <property type="entry name" value="TRNA (GUANINE-N(1)-)-METHYLTRANSFERASE"/>
    <property type="match status" value="1"/>
</dbReference>
<dbReference type="PANTHER" id="PTHR46417:SF1">
    <property type="entry name" value="TRNA (GUANINE-N(1)-)-METHYLTRANSFERASE"/>
    <property type="match status" value="1"/>
</dbReference>
<dbReference type="Pfam" id="PF01746">
    <property type="entry name" value="tRNA_m1G_MT"/>
    <property type="match status" value="1"/>
</dbReference>
<dbReference type="PIRSF" id="PIRSF000386">
    <property type="entry name" value="tRNA_mtase"/>
    <property type="match status" value="1"/>
</dbReference>
<dbReference type="SUPFAM" id="SSF75217">
    <property type="entry name" value="alpha/beta knot"/>
    <property type="match status" value="1"/>
</dbReference>
<gene>
    <name evidence="1" type="primary">trmD</name>
    <name type="ordered locus">NT01EI_3221</name>
</gene>
<organism>
    <name type="scientific">Edwardsiella ictaluri (strain 93-146)</name>
    <dbReference type="NCBI Taxonomy" id="634503"/>
    <lineage>
        <taxon>Bacteria</taxon>
        <taxon>Pseudomonadati</taxon>
        <taxon>Pseudomonadota</taxon>
        <taxon>Gammaproteobacteria</taxon>
        <taxon>Enterobacterales</taxon>
        <taxon>Hafniaceae</taxon>
        <taxon>Edwardsiella</taxon>
    </lineage>
</organism>
<reference key="1">
    <citation type="submission" date="2009-03" db="EMBL/GenBank/DDBJ databases">
        <title>Complete genome sequence of Edwardsiella ictaluri 93-146.</title>
        <authorList>
            <person name="Williams M.L."/>
            <person name="Gillaspy A.F."/>
            <person name="Dyer D.W."/>
            <person name="Thune R.L."/>
            <person name="Waldbieser G.C."/>
            <person name="Schuster S.C."/>
            <person name="Gipson J."/>
            <person name="Zaitshik J."/>
            <person name="Landry C."/>
            <person name="Lawrence M.L."/>
        </authorList>
    </citation>
    <scope>NUCLEOTIDE SEQUENCE [LARGE SCALE GENOMIC DNA]</scope>
    <source>
        <strain>93-146</strain>
    </source>
</reference>
<comment type="function">
    <text evidence="1">Specifically methylates guanosine-37 in various tRNAs.</text>
</comment>
<comment type="catalytic activity">
    <reaction evidence="1">
        <text>guanosine(37) in tRNA + S-adenosyl-L-methionine = N(1)-methylguanosine(37) in tRNA + S-adenosyl-L-homocysteine + H(+)</text>
        <dbReference type="Rhea" id="RHEA:36899"/>
        <dbReference type="Rhea" id="RHEA-COMP:10145"/>
        <dbReference type="Rhea" id="RHEA-COMP:10147"/>
        <dbReference type="ChEBI" id="CHEBI:15378"/>
        <dbReference type="ChEBI" id="CHEBI:57856"/>
        <dbReference type="ChEBI" id="CHEBI:59789"/>
        <dbReference type="ChEBI" id="CHEBI:73542"/>
        <dbReference type="ChEBI" id="CHEBI:74269"/>
        <dbReference type="EC" id="2.1.1.228"/>
    </reaction>
</comment>
<comment type="subunit">
    <text evidence="1">Homodimer.</text>
</comment>
<comment type="subcellular location">
    <subcellularLocation>
        <location evidence="1">Cytoplasm</location>
    </subcellularLocation>
</comment>
<comment type="similarity">
    <text evidence="1">Belongs to the RNA methyltransferase TrmD family.</text>
</comment>